<proteinExistence type="evidence at protein level"/>
<protein>
    <recommendedName>
        <fullName>CalliFMRFamide-8</fullName>
    </recommendedName>
</protein>
<accession>P41863</accession>
<comment type="subcellular location">
    <subcellularLocation>
        <location>Secreted</location>
    </subcellularLocation>
</comment>
<comment type="similarity">
    <text evidence="2">Belongs to the FARP (FMRFamide related peptide) family.</text>
</comment>
<organism>
    <name type="scientific">Calliphora vomitoria</name>
    <name type="common">Blue bottle fly</name>
    <name type="synonym">Musca vomitoria</name>
    <dbReference type="NCBI Taxonomy" id="27454"/>
    <lineage>
        <taxon>Eukaryota</taxon>
        <taxon>Metazoa</taxon>
        <taxon>Ecdysozoa</taxon>
        <taxon>Arthropoda</taxon>
        <taxon>Hexapoda</taxon>
        <taxon>Insecta</taxon>
        <taxon>Pterygota</taxon>
        <taxon>Neoptera</taxon>
        <taxon>Endopterygota</taxon>
        <taxon>Diptera</taxon>
        <taxon>Brachycera</taxon>
        <taxon>Muscomorpha</taxon>
        <taxon>Oestroidea</taxon>
        <taxon>Calliphoridae</taxon>
        <taxon>Calliphorinae</taxon>
        <taxon>Calliphora</taxon>
    </lineage>
</organism>
<keyword id="KW-0027">Amidation</keyword>
<keyword id="KW-0903">Direct protein sequencing</keyword>
<keyword id="KW-0527">Neuropeptide</keyword>
<keyword id="KW-0964">Secreted</keyword>
<sequence length="8" mass="957">GANDFMRF</sequence>
<name>FAR8_CALVO</name>
<dbReference type="PIR" id="H41978">
    <property type="entry name" value="H41978"/>
</dbReference>
<dbReference type="GO" id="GO:0005576">
    <property type="term" value="C:extracellular region"/>
    <property type="evidence" value="ECO:0007669"/>
    <property type="project" value="UniProtKB-SubCell"/>
</dbReference>
<dbReference type="GO" id="GO:0007218">
    <property type="term" value="P:neuropeptide signaling pathway"/>
    <property type="evidence" value="ECO:0007669"/>
    <property type="project" value="UniProtKB-KW"/>
</dbReference>
<feature type="peptide" id="PRO_0000043670" description="CalliFMRFamide-8">
    <location>
        <begin position="1"/>
        <end position="8"/>
    </location>
</feature>
<feature type="modified residue" description="Phenylalanine amide" evidence="1">
    <location>
        <position position="8"/>
    </location>
</feature>
<reference key="1">
    <citation type="journal article" date="1992" name="Proc. Natl. Acad. Sci. U.S.A.">
        <title>Isolation, structure, and activity of -Phe-Met-Arg-Phe-NH2 neuropeptides (designated calliFMRFamides) from the blowfly Calliphora vomitoria.</title>
        <authorList>
            <person name="Duve H."/>
            <person name="Johnsen A.H."/>
            <person name="Sewell J.C."/>
            <person name="Scott A.G."/>
            <person name="Orchard I."/>
            <person name="Rehfeld J.F."/>
            <person name="Thorpe A."/>
        </authorList>
    </citation>
    <scope>PROTEIN SEQUENCE</scope>
    <scope>AMIDATION AT PHE-8</scope>
    <source>
        <tissue>Thoracic ganglion</tissue>
    </source>
</reference>
<evidence type="ECO:0000269" key="1">
    <source>
    </source>
</evidence>
<evidence type="ECO:0000305" key="2"/>